<feature type="chain" id="PRO_0000186446" description="Alpha-bisabolene synthase">
    <location>
        <begin position="1"/>
        <end position="817"/>
    </location>
</feature>
<feature type="short sequence motif" description="DDXXD motif" evidence="5">
    <location>
        <begin position="566"/>
        <end position="570"/>
    </location>
</feature>
<feature type="binding site" evidence="2 6 7">
    <location>
        <position position="566"/>
    </location>
    <ligand>
        <name>Mg(2+)</name>
        <dbReference type="ChEBI" id="CHEBI:18420"/>
        <label>1</label>
    </ligand>
</feature>
<feature type="binding site" evidence="2 6 7">
    <location>
        <position position="566"/>
    </location>
    <ligand>
        <name>Mg(2+)</name>
        <dbReference type="ChEBI" id="CHEBI:18420"/>
        <label>2</label>
    </ligand>
</feature>
<feature type="binding site" evidence="2 6 7">
    <location>
        <position position="570"/>
    </location>
    <ligand>
        <name>Mg(2+)</name>
        <dbReference type="ChEBI" id="CHEBI:18420"/>
        <label>1</label>
    </ligand>
</feature>
<feature type="binding site" evidence="2 6 7">
    <location>
        <position position="570"/>
    </location>
    <ligand>
        <name>Mg(2+)</name>
        <dbReference type="ChEBI" id="CHEBI:18420"/>
        <label>2</label>
    </ligand>
</feature>
<feature type="binding site" evidence="2 6 7">
    <location>
        <position position="713"/>
    </location>
    <ligand>
        <name>Mg(2+)</name>
        <dbReference type="ChEBI" id="CHEBI:18420"/>
        <label>3</label>
    </ligand>
</feature>
<feature type="binding site" evidence="2 6 7">
    <location>
        <position position="717"/>
    </location>
    <ligand>
        <name>Mg(2+)</name>
        <dbReference type="ChEBI" id="CHEBI:18420"/>
        <label>3</label>
    </ligand>
</feature>
<feature type="binding site" evidence="2 6 7">
    <location>
        <position position="721"/>
    </location>
    <ligand>
        <name>Mg(2+)</name>
        <dbReference type="ChEBI" id="CHEBI:18420"/>
        <label>3</label>
    </ligand>
</feature>
<feature type="mutagenesis site" description="Abolishes catalytic activity." evidence="2">
    <original>D</original>
    <variation>A</variation>
    <location>
        <position position="570"/>
    </location>
</feature>
<feature type="mutagenesis site" description="Abolishes catalytic activity." evidence="2">
    <original>D</original>
    <variation>A</variation>
    <location>
        <position position="713"/>
    </location>
</feature>
<feature type="sequence conflict" description="In Ref. 1; AAC24191 and 2; AAK83562." evidence="5" ref="1 2">
    <original>A</original>
    <variation>V</variation>
    <location>
        <position position="65"/>
    </location>
</feature>
<feature type="sequence conflict" description="In Ref. 2; AAK83562." evidence="5" ref="2">
    <original>L</original>
    <variation>V</variation>
    <location>
        <position position="590"/>
    </location>
</feature>
<feature type="sequence conflict" description="In Ref. 2; AAK83562." evidence="5" ref="2">
    <original>T</original>
    <variation>S</variation>
    <location>
        <position position="655"/>
    </location>
</feature>
<feature type="sequence conflict" description="In Ref. 2; AAK83562." evidence="5" ref="2">
    <original>R</original>
    <variation>G</variation>
    <location>
        <position position="784"/>
    </location>
</feature>
<feature type="helix" evidence="9">
    <location>
        <begin position="36"/>
        <end position="41"/>
    </location>
</feature>
<feature type="helix" evidence="9">
    <location>
        <begin position="46"/>
        <end position="48"/>
    </location>
</feature>
<feature type="helix" evidence="9">
    <location>
        <begin position="50"/>
        <end position="71"/>
    </location>
</feature>
<feature type="helix" evidence="9">
    <location>
        <begin position="83"/>
        <end position="90"/>
    </location>
</feature>
<feature type="strand" evidence="9">
    <location>
        <begin position="99"/>
        <end position="103"/>
    </location>
</feature>
<feature type="helix" evidence="9">
    <location>
        <begin position="104"/>
        <end position="112"/>
    </location>
</feature>
<feature type="helix" evidence="9">
    <location>
        <begin position="128"/>
        <end position="144"/>
    </location>
</feature>
<feature type="helix" evidence="9">
    <location>
        <begin position="149"/>
        <end position="163"/>
    </location>
</feature>
<feature type="helix" evidence="9">
    <location>
        <begin position="169"/>
        <end position="171"/>
    </location>
</feature>
<feature type="helix" evidence="9">
    <location>
        <begin position="179"/>
        <end position="192"/>
    </location>
</feature>
<feature type="helix" evidence="9">
    <location>
        <begin position="202"/>
        <end position="216"/>
    </location>
</feature>
<feature type="helix" evidence="9">
    <location>
        <begin position="220"/>
        <end position="223"/>
    </location>
</feature>
<feature type="helix" evidence="9">
    <location>
        <begin position="229"/>
        <end position="236"/>
    </location>
</feature>
<feature type="turn" evidence="9">
    <location>
        <begin position="238"/>
        <end position="240"/>
    </location>
</feature>
<feature type="turn" evidence="9">
    <location>
        <begin position="243"/>
        <end position="245"/>
    </location>
</feature>
<feature type="helix" evidence="9">
    <location>
        <begin position="246"/>
        <end position="249"/>
    </location>
</feature>
<feature type="helix" evidence="9">
    <location>
        <begin position="260"/>
        <end position="270"/>
    </location>
</feature>
<feature type="helix" evidence="9">
    <location>
        <begin position="273"/>
        <end position="286"/>
    </location>
</feature>
<feature type="strand" evidence="9">
    <location>
        <begin position="292"/>
        <end position="294"/>
    </location>
</feature>
<feature type="helix" evidence="9">
    <location>
        <begin position="297"/>
        <end position="310"/>
    </location>
</feature>
<feature type="helix" evidence="9">
    <location>
        <begin position="314"/>
        <end position="317"/>
    </location>
</feature>
<feature type="helix" evidence="9">
    <location>
        <begin position="318"/>
        <end position="331"/>
    </location>
</feature>
<feature type="helix" evidence="9">
    <location>
        <begin position="348"/>
        <end position="360"/>
    </location>
</feature>
<feature type="helix" evidence="9">
    <location>
        <begin position="367"/>
        <end position="373"/>
    </location>
</feature>
<feature type="helix" evidence="9">
    <location>
        <begin position="387"/>
        <end position="401"/>
    </location>
</feature>
<feature type="helix" evidence="9">
    <location>
        <begin position="409"/>
        <end position="426"/>
    </location>
</feature>
<feature type="helix" evidence="9">
    <location>
        <begin position="429"/>
        <end position="432"/>
    </location>
</feature>
<feature type="helix" evidence="9">
    <location>
        <begin position="434"/>
        <end position="438"/>
    </location>
</feature>
<feature type="helix" evidence="9">
    <location>
        <begin position="441"/>
        <end position="450"/>
    </location>
</feature>
<feature type="strand" evidence="8">
    <location>
        <begin position="453"/>
        <end position="455"/>
    </location>
</feature>
<feature type="helix" evidence="9">
    <location>
        <begin position="458"/>
        <end position="466"/>
    </location>
</feature>
<feature type="strand" evidence="9">
    <location>
        <begin position="475"/>
        <end position="481"/>
    </location>
</feature>
<feature type="turn" evidence="9">
    <location>
        <begin position="484"/>
        <end position="486"/>
    </location>
</feature>
<feature type="helix" evidence="9">
    <location>
        <begin position="489"/>
        <end position="519"/>
    </location>
</feature>
<feature type="helix" evidence="9">
    <location>
        <begin position="522"/>
        <end position="524"/>
    </location>
</feature>
<feature type="helix" evidence="9">
    <location>
        <begin position="532"/>
        <end position="540"/>
    </location>
</feature>
<feature type="helix" evidence="9">
    <location>
        <begin position="546"/>
        <end position="548"/>
    </location>
</feature>
<feature type="helix" evidence="9">
    <location>
        <begin position="549"/>
        <end position="570"/>
    </location>
</feature>
<feature type="helix" evidence="9">
    <location>
        <begin position="575"/>
        <end position="587"/>
    </location>
</feature>
<feature type="helix" evidence="9">
    <location>
        <begin position="590"/>
        <end position="595"/>
    </location>
</feature>
<feature type="helix" evidence="9">
    <location>
        <begin position="598"/>
        <end position="622"/>
    </location>
</feature>
<feature type="helix" evidence="9">
    <location>
        <begin position="627"/>
        <end position="649"/>
    </location>
</feature>
<feature type="helix" evidence="9">
    <location>
        <begin position="656"/>
        <end position="666"/>
    </location>
</feature>
<feature type="helix" evidence="9">
    <location>
        <begin position="669"/>
        <end position="677"/>
    </location>
</feature>
<feature type="helix" evidence="9">
    <location>
        <begin position="687"/>
        <end position="691"/>
    </location>
</feature>
<feature type="helix" evidence="9">
    <location>
        <begin position="701"/>
        <end position="716"/>
    </location>
</feature>
<feature type="helix" evidence="9">
    <location>
        <begin position="730"/>
        <end position="737"/>
    </location>
</feature>
<feature type="helix" evidence="9">
    <location>
        <begin position="743"/>
        <end position="766"/>
    </location>
</feature>
<feature type="strand" evidence="10">
    <location>
        <begin position="769"/>
        <end position="771"/>
    </location>
</feature>
<feature type="helix" evidence="9">
    <location>
        <begin position="773"/>
        <end position="789"/>
    </location>
</feature>
<feature type="helix" evidence="9">
    <location>
        <begin position="800"/>
        <end position="811"/>
    </location>
</feature>
<comment type="function">
    <text evidence="2 3 4">Converts farnesyl diphosphate to alpha-bisabolene (PubMed:22153510, PubMed:9539701, PubMed:9618485). Involved in defensive oleoresin formation in conifers in response to insect attack or other injury (PubMed:9539701, PubMed:9618485). Involved in sesquiterpene (C15) olefins biosynthesis (PubMed:9539701, PubMed:9618485).</text>
</comment>
<comment type="catalytic activity">
    <reaction evidence="2 4">
        <text>(2E,6E)-farnesyl diphosphate = (E,R)-alpha-bisabolene + diphosphate</text>
        <dbReference type="Rhea" id="RHEA:25436"/>
        <dbReference type="ChEBI" id="CHEBI:33019"/>
        <dbReference type="ChEBI" id="CHEBI:49243"/>
        <dbReference type="ChEBI" id="CHEBI:175763"/>
        <dbReference type="EC" id="4.2.3.38"/>
    </reaction>
</comment>
<comment type="cofactor">
    <cofactor evidence="2 4">
        <name>Mg(2+)</name>
        <dbReference type="ChEBI" id="CHEBI:18420"/>
    </cofactor>
    <cofactor evidence="4">
        <name>Mn(2+)</name>
        <dbReference type="ChEBI" id="CHEBI:29035"/>
    </cofactor>
    <text evidence="2 4">Binds 3 divalent metal cations per subunit (PubMed:22153510). Can use either Mg(2+) or Mn(2+) (PubMed:9618485).</text>
</comment>
<comment type="cofactor">
    <cofactor evidence="1">
        <name>K(+)</name>
        <dbReference type="ChEBI" id="CHEBI:29103"/>
    </cofactor>
</comment>
<comment type="biophysicochemical properties">
    <kinetics>
        <KM evidence="2">49.5 uM for (2E,6E)-farnesyl diphosphate</KM>
    </kinetics>
</comment>
<comment type="pathway">
    <text evidence="5">Terpene metabolism; oleoresin biosynthesis.</text>
</comment>
<comment type="subcellular location">
    <subcellularLocation>
        <location evidence="5">Cytoplasm</location>
    </subcellularLocation>
</comment>
<comment type="induction">
    <text evidence="4">By wounding.</text>
</comment>
<comment type="domain">
    <text>The Asp-Asp-Xaa-Xaa-Asp/Glu (DDXXD/E) motif is important for the catalytic activity, presumably through binding to Mg(2+).</text>
</comment>
<comment type="miscellaneous">
    <text>The conserved 25-Arg-Arg-26 motif may play a role in the isomerization step of the terpenoid cyclization reaction sequence.</text>
</comment>
<comment type="similarity">
    <text evidence="5">Belongs to the terpene synthase family. Tpsd subfamily.</text>
</comment>
<reference key="1">
    <citation type="journal article" date="1998" name="Proc. Natl. Acad. Sci. U.S.A.">
        <title>Terpenoid-based defenses in conifers: cDNA cloning, characterization, and functional expression of wound-inducible (E)-alpha-bisabolene synthase from grand fir (Abies grandis).</title>
        <authorList>
            <person name="Bohlmann J."/>
            <person name="Crock J."/>
            <person name="Jetter R."/>
            <person name="Croteau R.B."/>
        </authorList>
    </citation>
    <scope>NUCLEOTIDE SEQUENCE [MRNA]</scope>
    <scope>FUNCTION</scope>
    <scope>CATALYTIC ACTIVITY</scope>
    <scope>COFACTOR</scope>
    <scope>INDUCTION</scope>
</reference>
<reference key="2">
    <citation type="journal article" date="2001" name="Genetics">
        <title>Genomic organization of plant terpene synthases and molecular evolutionary implications.</title>
        <authorList>
            <person name="Trapp S.C."/>
            <person name="Croteau R.B."/>
        </authorList>
    </citation>
    <scope>NUCLEOTIDE SEQUENCE [GENOMIC DNA] OF 2-817</scope>
    <scope>NOMENCLATURE</scope>
</reference>
<reference key="3">
    <citation type="journal article" date="1998" name="Proc. Natl. Acad. Sci. U.S.A.">
        <title>Plant terpenoid synthases: molecular biology and phylogenetic analysis.</title>
        <authorList>
            <person name="Bohlmann J."/>
            <person name="Meyer-Gauen G."/>
            <person name="Croteau R.B."/>
        </authorList>
    </citation>
    <scope>GENE FAMILY</scope>
    <scope>NOMENCLATURE</scope>
    <scope>FUNCTION</scope>
</reference>
<reference key="4">
    <citation type="journal article" date="2011" name="Structure">
        <title>Structure of a three-domain sesquiterpene synthase: a prospective target for advanced biofuels production.</title>
        <authorList>
            <person name="McAndrew R.P."/>
            <person name="Peralta-Yahya P.P."/>
            <person name="DeGiovanni A."/>
            <person name="Pereira J.H."/>
            <person name="Hadi M.Z."/>
            <person name="Keasling J.D."/>
            <person name="Adams P.D."/>
        </authorList>
    </citation>
    <scope>X-RAY CRYSTALLOGRAPHY (1.86 ANGSTROMS) IN COMPLEX WITH MAGNESIUM</scope>
    <scope>FUNCTION</scope>
    <scope>CATALYTIC ACTIVITY</scope>
    <scope>COFACTOR</scope>
    <scope>BIOPHYSICOCHEMICAL PROPERTIES</scope>
    <scope>MUTAGENESIS OF ASP-570 AND ASP-713</scope>
</reference>
<proteinExistence type="evidence at protein level"/>
<keyword id="KW-0002">3D-structure</keyword>
<keyword id="KW-0963">Cytoplasm</keyword>
<keyword id="KW-0456">Lyase</keyword>
<keyword id="KW-0460">Magnesium</keyword>
<keyword id="KW-0464">Manganese</keyword>
<keyword id="KW-0479">Metal-binding</keyword>
<protein>
    <recommendedName>
        <fullName>Alpha-bisabolene synthase</fullName>
        <ecNumber evidence="2 4">4.2.3.38</ecNumber>
    </recommendedName>
    <alternativeName>
        <fullName>(E)-alpha-bisabolene synthase</fullName>
    </alternativeName>
    <alternativeName>
        <fullName>AgfEabis</fullName>
    </alternativeName>
</protein>
<sequence length="817" mass="93749">MAGVSAVSKVSSLVCDLSSTSGLIRRTANPHPNVWGYDLVHSLKSPYIDSSYRERAEVLVSEIKAMLNPAITGDGESMITPSAYDTAWVARVPAIDGSARPQFPQTVDWILKNQLKDGSWGIQSHFLLSDRLLATLSCVLVLLKWNVGDLQVEQGIEFIKSNLELVKDETDQDSLVTDFEIIFPSLLREAQSLRLGLPYDLPYIHLLQTKRQERLAKLSREEIYAVPSPLLYSLEGIQDIVEWERIMEVQSQDGSFLSSPASTACVFMHTGDAKCLEFLNSVMIKFGNFVPCLYPVDLLERLLIVDNIVRLGIYRHFEKEIKEALDYVYRHWNERGIGWGRLNPIADLETTALGFRLLRLHRYNVSPAIFDNFKDANGKFICSTGQFNKDVASMLNLYRASQLAFPGENILDEAKSFATKYLREALEKSETSSAWNNKQNLSQEIKYALKTSWHASVPRVEAKRYCQVYRPDYARIAKCVYKLPYVNNEKFLELGKLDFNIIQSIHQEEMKNVTSWFRDSGLPLFTFARERPLEFYFLVAAGTYEPQYAKCRFLFTKVACLQTVLDDMYDTYGTLDELKLFTEAVRRWDLSFTENLPDYMKLCYQIYYDIVHEVAWEAEKEQGRELVSFFRKGWEDYLLGYYEEAEWLAAEYVPTLDEYIKNGITSIGQRILLLSGVLIMDGQLLSQEALEKVDYPGRRVLTELNSLISRLADDTKTYKAEKARGELASSIECYMKDHPECTEEEALDHIYSILEPAVKELTREFLKPDDVPFACKKMLFEETRVTMVIFKDGDGFGVSKLEVKDHIKECLIEPLPL</sequence>
<accession>O81086</accession>
<accession>Q94FW2</accession>
<accession>Q9SAU6</accession>
<gene>
    <name type="primary">ag1</name>
</gene>
<name>TPSD1_ABIGR</name>
<organism>
    <name type="scientific">Abies grandis</name>
    <name type="common">Grand fir</name>
    <name type="synonym">Pinus grandis</name>
    <dbReference type="NCBI Taxonomy" id="46611"/>
    <lineage>
        <taxon>Eukaryota</taxon>
        <taxon>Viridiplantae</taxon>
        <taxon>Streptophyta</taxon>
        <taxon>Embryophyta</taxon>
        <taxon>Tracheophyta</taxon>
        <taxon>Spermatophyta</taxon>
        <taxon>Pinopsida</taxon>
        <taxon>Pinidae</taxon>
        <taxon>Conifers I</taxon>
        <taxon>Pinales</taxon>
        <taxon>Pinaceae</taxon>
        <taxon>Abies</taxon>
    </lineage>
</organism>
<evidence type="ECO:0000250" key="1"/>
<evidence type="ECO:0000269" key="2">
    <source>
    </source>
</evidence>
<evidence type="ECO:0000269" key="3">
    <source>
    </source>
</evidence>
<evidence type="ECO:0000269" key="4">
    <source>
    </source>
</evidence>
<evidence type="ECO:0000305" key="5"/>
<evidence type="ECO:0007744" key="6">
    <source>
        <dbReference type="PDB" id="3SAE"/>
    </source>
</evidence>
<evidence type="ECO:0007744" key="7">
    <source>
        <dbReference type="PDB" id="3SDU"/>
    </source>
</evidence>
<evidence type="ECO:0007829" key="8">
    <source>
        <dbReference type="PDB" id="3SDQ"/>
    </source>
</evidence>
<evidence type="ECO:0007829" key="9">
    <source>
        <dbReference type="PDB" id="3SDR"/>
    </source>
</evidence>
<evidence type="ECO:0007829" key="10">
    <source>
        <dbReference type="PDB" id="3SDT"/>
    </source>
</evidence>
<dbReference type="EC" id="4.2.3.38" evidence="2 4"/>
<dbReference type="EMBL" id="AF006195">
    <property type="protein sequence ID" value="AAC24192.1"/>
    <property type="molecule type" value="mRNA"/>
</dbReference>
<dbReference type="EMBL" id="AF006194">
    <property type="protein sequence ID" value="AAC24191.1"/>
    <property type="molecule type" value="mRNA"/>
</dbReference>
<dbReference type="EMBL" id="AF326515">
    <property type="protein sequence ID" value="AAK83562.1"/>
    <property type="molecule type" value="Genomic_DNA"/>
</dbReference>
<dbReference type="PDB" id="3SAE">
    <property type="method" value="X-ray"/>
    <property type="resolution" value="1.96 A"/>
    <property type="chains" value="A=1-817"/>
</dbReference>
<dbReference type="PDB" id="3SDQ">
    <property type="method" value="X-ray"/>
    <property type="resolution" value="2.14 A"/>
    <property type="chains" value="A=1-817"/>
</dbReference>
<dbReference type="PDB" id="3SDR">
    <property type="method" value="X-ray"/>
    <property type="resolution" value="1.86 A"/>
    <property type="chains" value="A=1-817"/>
</dbReference>
<dbReference type="PDB" id="3SDT">
    <property type="method" value="X-ray"/>
    <property type="resolution" value="1.89 A"/>
    <property type="chains" value="A=1-817"/>
</dbReference>
<dbReference type="PDB" id="3SDU">
    <property type="method" value="X-ray"/>
    <property type="resolution" value="1.89 A"/>
    <property type="chains" value="A=1-817"/>
</dbReference>
<dbReference type="PDB" id="3SDV">
    <property type="method" value="X-ray"/>
    <property type="resolution" value="2.20 A"/>
    <property type="chains" value="A=1-817"/>
</dbReference>
<dbReference type="PDBsum" id="3SAE"/>
<dbReference type="PDBsum" id="3SDQ"/>
<dbReference type="PDBsum" id="3SDR"/>
<dbReference type="PDBsum" id="3SDT"/>
<dbReference type="PDBsum" id="3SDU"/>
<dbReference type="PDBsum" id="3SDV"/>
<dbReference type="SMR" id="O81086"/>
<dbReference type="KEGG" id="ag:AAC24192"/>
<dbReference type="BRENDA" id="4.2.3.38">
    <property type="organism ID" value="2"/>
</dbReference>
<dbReference type="UniPathway" id="UPA00924"/>
<dbReference type="EvolutionaryTrace" id="O81086"/>
<dbReference type="GO" id="GO:0005737">
    <property type="term" value="C:cytoplasm"/>
    <property type="evidence" value="ECO:0007669"/>
    <property type="project" value="UniProtKB-SubCell"/>
</dbReference>
<dbReference type="GO" id="GO:0052681">
    <property type="term" value="F:alpha-bisabolene synthase activity"/>
    <property type="evidence" value="ECO:0007669"/>
    <property type="project" value="UniProtKB-EC"/>
</dbReference>
<dbReference type="GO" id="GO:0000287">
    <property type="term" value="F:magnesium ion binding"/>
    <property type="evidence" value="ECO:0007669"/>
    <property type="project" value="InterPro"/>
</dbReference>
<dbReference type="GO" id="GO:0010333">
    <property type="term" value="F:terpene synthase activity"/>
    <property type="evidence" value="ECO:0007669"/>
    <property type="project" value="InterPro"/>
</dbReference>
<dbReference type="GO" id="GO:0016102">
    <property type="term" value="P:diterpenoid biosynthetic process"/>
    <property type="evidence" value="ECO:0007669"/>
    <property type="project" value="InterPro"/>
</dbReference>
<dbReference type="CDD" id="cd00684">
    <property type="entry name" value="Terpene_cyclase_plant_C1"/>
    <property type="match status" value="1"/>
</dbReference>
<dbReference type="FunFam" id="1.50.10.130:FF:000002">
    <property type="entry name" value="Ent-copalyl diphosphate synthase, chloroplastic"/>
    <property type="match status" value="1"/>
</dbReference>
<dbReference type="FunFam" id="1.10.600.10:FF:000005">
    <property type="entry name" value="Ent-kaur-16-ene synthase, chloroplastic"/>
    <property type="match status" value="1"/>
</dbReference>
<dbReference type="Gene3D" id="1.50.10.160">
    <property type="match status" value="1"/>
</dbReference>
<dbReference type="Gene3D" id="1.10.600.10">
    <property type="entry name" value="Farnesyl Diphosphate Synthase"/>
    <property type="match status" value="1"/>
</dbReference>
<dbReference type="Gene3D" id="1.50.10.130">
    <property type="entry name" value="Terpene synthase, N-terminal domain"/>
    <property type="match status" value="1"/>
</dbReference>
<dbReference type="InterPro" id="IPR008949">
    <property type="entry name" value="Isoprenoid_synthase_dom_sf"/>
</dbReference>
<dbReference type="InterPro" id="IPR044814">
    <property type="entry name" value="Terpene_cyclase_plant_C1"/>
</dbReference>
<dbReference type="InterPro" id="IPR001906">
    <property type="entry name" value="Terpene_synth_N"/>
</dbReference>
<dbReference type="InterPro" id="IPR036965">
    <property type="entry name" value="Terpene_synth_N_sf"/>
</dbReference>
<dbReference type="InterPro" id="IPR050148">
    <property type="entry name" value="Terpene_synthase-like"/>
</dbReference>
<dbReference type="InterPro" id="IPR005630">
    <property type="entry name" value="Terpene_synthase_metal-bd"/>
</dbReference>
<dbReference type="InterPro" id="IPR008930">
    <property type="entry name" value="Terpenoid_cyclase/PrenylTrfase"/>
</dbReference>
<dbReference type="PANTHER" id="PTHR31739:SF25">
    <property type="entry name" value="(E,E)-GERANYLLINALOOL SYNTHASE"/>
    <property type="match status" value="1"/>
</dbReference>
<dbReference type="PANTHER" id="PTHR31739">
    <property type="entry name" value="ENT-COPALYL DIPHOSPHATE SYNTHASE, CHLOROPLASTIC"/>
    <property type="match status" value="1"/>
</dbReference>
<dbReference type="Pfam" id="PF01397">
    <property type="entry name" value="Terpene_synth"/>
    <property type="match status" value="1"/>
</dbReference>
<dbReference type="Pfam" id="PF03936">
    <property type="entry name" value="Terpene_synth_C"/>
    <property type="match status" value="1"/>
</dbReference>
<dbReference type="SFLD" id="SFLDS00005">
    <property type="entry name" value="Isoprenoid_Synthase_Type_I"/>
    <property type="match status" value="1"/>
</dbReference>
<dbReference type="SFLD" id="SFLDG01604">
    <property type="entry name" value="Terpene_Cyclase_Like_1_C_Termi"/>
    <property type="match status" value="1"/>
</dbReference>
<dbReference type="SFLD" id="SFLDG01014">
    <property type="entry name" value="Terpene_Cyclase_Like_1_N-term"/>
    <property type="match status" value="1"/>
</dbReference>
<dbReference type="SUPFAM" id="SSF48239">
    <property type="entry name" value="Terpenoid cyclases/Protein prenyltransferases"/>
    <property type="match status" value="2"/>
</dbReference>
<dbReference type="SUPFAM" id="SSF48576">
    <property type="entry name" value="Terpenoid synthases"/>
    <property type="match status" value="1"/>
</dbReference>